<protein>
    <recommendedName>
        <fullName>Hydrogenase expression/formation protein HupV</fullName>
    </recommendedName>
</protein>
<gene>
    <name type="primary">hupV</name>
</gene>
<accession>Q43959</accession>
<proteinExistence type="inferred from homology"/>
<evidence type="ECO:0000305" key="1"/>
<dbReference type="EMBL" id="L25315">
    <property type="protein sequence ID" value="AAA64454.1"/>
    <property type="molecule type" value="Genomic_DNA"/>
</dbReference>
<dbReference type="PIR" id="S53663">
    <property type="entry name" value="S53663"/>
</dbReference>
<dbReference type="GO" id="GO:0016151">
    <property type="term" value="F:nickel cation binding"/>
    <property type="evidence" value="ECO:0007669"/>
    <property type="project" value="InterPro"/>
</dbReference>
<dbReference type="Gene3D" id="1.10.645.10">
    <property type="entry name" value="Cytochrome-c3 Hydrogenase, chain B"/>
    <property type="match status" value="2"/>
</dbReference>
<dbReference type="InterPro" id="IPR001501">
    <property type="entry name" value="Ni-dep_hyd_lsu"/>
</dbReference>
<dbReference type="InterPro" id="IPR029014">
    <property type="entry name" value="NiFe-Hase_large"/>
</dbReference>
<dbReference type="InterPro" id="IPR050867">
    <property type="entry name" value="NiFe/NiFeSe_hydrgnase_LSU"/>
</dbReference>
<dbReference type="PANTHER" id="PTHR42958:SF4">
    <property type="entry name" value="HYDROGENASE EXPRESSION_FORMATION PROTEIN HUPK"/>
    <property type="match status" value="1"/>
</dbReference>
<dbReference type="PANTHER" id="PTHR42958">
    <property type="entry name" value="HYDROGENASE-2 LARGE CHAIN"/>
    <property type="match status" value="1"/>
</dbReference>
<dbReference type="Pfam" id="PF00374">
    <property type="entry name" value="NiFeSe_Hases"/>
    <property type="match status" value="1"/>
</dbReference>
<dbReference type="SUPFAM" id="SSF56762">
    <property type="entry name" value="HydB/Nqo4-like"/>
    <property type="match status" value="1"/>
</dbReference>
<comment type="similarity">
    <text evidence="1">Belongs to the HupK family.</text>
</comment>
<name>HUPV_AZOCH</name>
<feature type="chain" id="PRO_0000201429" description="Hydrogenase expression/formation protein HupV">
    <location>
        <begin position="1"/>
        <end position="342"/>
    </location>
</feature>
<organism>
    <name type="scientific">Azotobacter chroococcum mcd 1</name>
    <dbReference type="NCBI Taxonomy" id="355"/>
    <lineage>
        <taxon>Bacteria</taxon>
        <taxon>Pseudomonadati</taxon>
        <taxon>Pseudomonadota</taxon>
        <taxon>Gammaproteobacteria</taxon>
        <taxon>Pseudomonadales</taxon>
        <taxon>Pseudomonadaceae</taxon>
        <taxon>Azotobacter</taxon>
    </lineage>
</organism>
<sequence>MAGRLQVEVRLQDGVIRAVDTRLQRPLAQLSRLLVGQTAEAALARLPLLFSLCAAAQQVAALRALERAAGWTAEPEVERGRSQLTELELIRESLLRLVQVWELPLPLERLKVLVALCRRGAARLQPLTSFRAPSLPADPHLQETLAELAAAWADLELPITADWLGPRLGRWQEVVLGGPPPAVFDPADLSALLAQLRSGDTRASIAGQPRITGPLCAAEAQLSAAAQIEQHVGALLRHTAQAIDSLQQPSPPPAVAGLLAGEGVGLAQTARGALLHRVCLDEGTVGAWQLLAPTDWNFHEDGPLRRRLCGVRVAEEDAGALLRELILAVDPCVAFEVKIIHA</sequence>
<reference key="1">
    <citation type="journal article" date="1994" name="J. Mol. Biol.">
        <title>Sequences, organization and analysis of the hupZMNOQRTV genes from the Azotobacter chroococcum hydrogenase gene cluster.</title>
        <authorList>
            <person name="Du L."/>
            <person name="Tibelius K.H."/>
            <person name="Souza E.M."/>
            <person name="Garg R.P."/>
            <person name="Yates M.G."/>
        </authorList>
    </citation>
    <scope>NUCLEOTIDE SEQUENCE [GENOMIC DNA]</scope>
</reference>